<comment type="function">
    <text>Core component of nucleosome which plays a central role in DNA double strand break (DSB) repair. Nucleosomes wrap and compact DNA into chromatin, limiting DNA accessibility to the cellular machineries which require DNA as a template. Histones thereby play a central role in transcription regulation, DNA repair, DNA replication and chromosomal stability. DNA accessibility is regulated via a complex set of post-translational modifications of histones, also called histone code, and nucleosome remodeling.</text>
</comment>
<comment type="subunit">
    <text>The nucleosome is a histone octamer containing two molecules each of H2A, H2B, H3 and H4 assembled in one H3-H4 heterotetramer and two H2A-H2B heterodimers. The octamer wraps approximately 147 bp of DNA.</text>
</comment>
<comment type="subcellular location">
    <subcellularLocation>
        <location>Nucleus</location>
    </subcellularLocation>
    <subcellularLocation>
        <location>Chromosome</location>
    </subcellularLocation>
</comment>
<comment type="domain">
    <text>The [ST]-Q motif constitutes a recognition sequence for kinases from the PI3/PI4-kinase family.</text>
</comment>
<comment type="PTM">
    <text evidence="1">Phosphorylated to form H2AS128ph (gamma-H2A) in response to DNA double-strand breaks (DSBs) generated by exogenous genotoxic agents and by stalled replication forks. Phosphorylation is dependent on the DNA damage checkpoint kinases MEC1/ATR and TEL1/ATM, spreads on either side of a detected DSB site and may mark the surrounding chromatin for recruitment of proteins required for DNA damage signaling and repair. Gamma-H2A is removed from the DNA prior to the strand invasion-primer extension step of the repair process and subsequently dephosphorylated. Dephosphorylation is necessary for efficient recovery from the DNA damage checkpoint (By similarity).</text>
</comment>
<comment type="PTM">
    <text evidence="1">Acetylated by ESA1 to form H2AK4ac and H2AK7ac.</text>
</comment>
<comment type="miscellaneous">
    <text evidence="3">In contrast to vertebrates and insects, its C-terminus is not monoubiquitinated.</text>
</comment>
<comment type="similarity">
    <text evidence="3">Belongs to the histone H2A family.</text>
</comment>
<comment type="caution">
    <text evidence="3">To ensure consistency between histone entries, we follow the 'Brno' nomenclature for histone modifications, with positions referring to those used in the literature for the 'closest' model organism. Due to slight variations in histone sequences between organisms and to the presence of initiator methionine in UniProtKB/Swiss-Prot sequences, the actual positions of modified amino acids in the sequence generally differ. In this entry the following conventions are used: H2AK4ac = acetylated Lys-5; H2AK7ac = acetylated Lys-9; H2AS128ph = phosphorylated Ser-131.</text>
</comment>
<gene>
    <name type="primary">HTA1</name>
    <name type="ORF">SNOG_14611</name>
</gene>
<proteinExistence type="inferred from homology"/>
<keyword id="KW-0007">Acetylation</keyword>
<keyword id="KW-0158">Chromosome</keyword>
<keyword id="KW-0227">DNA damage</keyword>
<keyword id="KW-0234">DNA repair</keyword>
<keyword id="KW-0238">DNA-binding</keyword>
<keyword id="KW-0488">Methylation</keyword>
<keyword id="KW-0544">Nucleosome core</keyword>
<keyword id="KW-0539">Nucleus</keyword>
<keyword id="KW-0597">Phosphoprotein</keyword>
<name>H2A_PHANO</name>
<protein>
    <recommendedName>
        <fullName>Histone H2A</fullName>
    </recommendedName>
</protein>
<accession>Q0U1A1</accession>
<evidence type="ECO:0000250" key="1"/>
<evidence type="ECO:0000256" key="2">
    <source>
        <dbReference type="SAM" id="MobiDB-lite"/>
    </source>
</evidence>
<evidence type="ECO:0000305" key="3"/>
<organism>
    <name type="scientific">Phaeosphaeria nodorum (strain SN15 / ATCC MYA-4574 / FGSC 10173)</name>
    <name type="common">Glume blotch fungus</name>
    <name type="synonym">Parastagonospora nodorum</name>
    <dbReference type="NCBI Taxonomy" id="321614"/>
    <lineage>
        <taxon>Eukaryota</taxon>
        <taxon>Fungi</taxon>
        <taxon>Dikarya</taxon>
        <taxon>Ascomycota</taxon>
        <taxon>Pezizomycotina</taxon>
        <taxon>Dothideomycetes</taxon>
        <taxon>Pleosporomycetidae</taxon>
        <taxon>Pleosporales</taxon>
        <taxon>Pleosporineae</taxon>
        <taxon>Phaeosphaeriaceae</taxon>
        <taxon>Parastagonospora</taxon>
    </lineage>
</organism>
<reference key="1">
    <citation type="journal article" date="2007" name="Plant Cell">
        <title>Dothideomycete-plant interactions illuminated by genome sequencing and EST analysis of the wheat pathogen Stagonospora nodorum.</title>
        <authorList>
            <person name="Hane J.K."/>
            <person name="Lowe R.G.T."/>
            <person name="Solomon P.S."/>
            <person name="Tan K.-C."/>
            <person name="Schoch C.L."/>
            <person name="Spatafora J.W."/>
            <person name="Crous P.W."/>
            <person name="Kodira C.D."/>
            <person name="Birren B.W."/>
            <person name="Galagan J.E."/>
            <person name="Torriani S.F.F."/>
            <person name="McDonald B.A."/>
            <person name="Oliver R.P."/>
        </authorList>
    </citation>
    <scope>NUCLEOTIDE SEQUENCE [LARGE SCALE GENOMIC DNA]</scope>
    <source>
        <strain>SN15 / ATCC MYA-4574 / FGSC 10173</strain>
    </source>
</reference>
<feature type="initiator methionine" description="Removed" evidence="1">
    <location>
        <position position="1"/>
    </location>
</feature>
<feature type="chain" id="PRO_0000297737" description="Histone H2A">
    <location>
        <begin position="2"/>
        <end position="134"/>
    </location>
</feature>
<feature type="region of interest" description="Disordered" evidence="2">
    <location>
        <begin position="1"/>
        <end position="26"/>
    </location>
</feature>
<feature type="short sequence motif" description="[ST]-Q motif">
    <location>
        <begin position="131"/>
        <end position="132"/>
    </location>
</feature>
<feature type="compositionally biased region" description="Gly residues" evidence="2">
    <location>
        <begin position="1"/>
        <end position="10"/>
    </location>
</feature>
<feature type="compositionally biased region" description="Low complexity" evidence="2">
    <location>
        <begin position="11"/>
        <end position="25"/>
    </location>
</feature>
<feature type="site" description="Not ubiquitinated" evidence="3">
    <location>
        <position position="121"/>
    </location>
</feature>
<feature type="modified residue" description="N6-acetyllysine" evidence="1">
    <location>
        <position position="5"/>
    </location>
</feature>
<feature type="modified residue" description="N6-acetyllysine" evidence="1">
    <location>
        <position position="9"/>
    </location>
</feature>
<feature type="modified residue" description="N5-methylglutamine" evidence="1">
    <location>
        <position position="107"/>
    </location>
</feature>
<feature type="modified residue" description="Phosphoserine" evidence="1">
    <location>
        <position position="131"/>
    </location>
</feature>
<sequence length="134" mass="14136">MTGGKSGGKASGSKSSAQSRSSKAGLAFPVGRVHRLLRKGNYAQRVGAGAPVYLAAVLEYLAAEILELAGNAARDNKKTRIIPRHLQLAIRNDEELNKLLGHVTIAQGGVLPNIHQNLLPKKTAKPGKGPSQEL</sequence>
<dbReference type="EMBL" id="CH445356">
    <property type="protein sequence ID" value="EAT78151.1"/>
    <property type="molecule type" value="Genomic_DNA"/>
</dbReference>
<dbReference type="RefSeq" id="XP_001804793.1">
    <property type="nucleotide sequence ID" value="XM_001804741.1"/>
</dbReference>
<dbReference type="SMR" id="Q0U1A1"/>
<dbReference type="FunCoup" id="Q0U1A1">
    <property type="interactions" value="912"/>
</dbReference>
<dbReference type="STRING" id="321614.Q0U1A1"/>
<dbReference type="EnsemblFungi" id="SNOT_14611">
    <property type="protein sequence ID" value="SNOT_14611"/>
    <property type="gene ID" value="SNOG_14611"/>
</dbReference>
<dbReference type="GeneID" id="5981718"/>
<dbReference type="KEGG" id="pno:SNOG_14611"/>
<dbReference type="VEuPathDB" id="FungiDB:JI435_146110"/>
<dbReference type="eggNOG" id="KOG1756">
    <property type="taxonomic scope" value="Eukaryota"/>
</dbReference>
<dbReference type="HOGENOM" id="CLU_062828_3_0_1"/>
<dbReference type="InParanoid" id="Q0U1A1"/>
<dbReference type="OMA" id="CALESQH"/>
<dbReference type="OrthoDB" id="9421954at2759"/>
<dbReference type="Proteomes" id="UP000001055">
    <property type="component" value="Unassembled WGS sequence"/>
</dbReference>
<dbReference type="GO" id="GO:0000786">
    <property type="term" value="C:nucleosome"/>
    <property type="evidence" value="ECO:0000318"/>
    <property type="project" value="GO_Central"/>
</dbReference>
<dbReference type="GO" id="GO:0005634">
    <property type="term" value="C:nucleus"/>
    <property type="evidence" value="ECO:0000318"/>
    <property type="project" value="GO_Central"/>
</dbReference>
<dbReference type="GO" id="GO:0003677">
    <property type="term" value="F:DNA binding"/>
    <property type="evidence" value="ECO:0007669"/>
    <property type="project" value="UniProtKB-KW"/>
</dbReference>
<dbReference type="GO" id="GO:0046982">
    <property type="term" value="F:protein heterodimerization activity"/>
    <property type="evidence" value="ECO:0007669"/>
    <property type="project" value="InterPro"/>
</dbReference>
<dbReference type="GO" id="GO:0030527">
    <property type="term" value="F:structural constituent of chromatin"/>
    <property type="evidence" value="ECO:0000318"/>
    <property type="project" value="GO_Central"/>
</dbReference>
<dbReference type="GO" id="GO:0006281">
    <property type="term" value="P:DNA repair"/>
    <property type="evidence" value="ECO:0007669"/>
    <property type="project" value="UniProtKB-KW"/>
</dbReference>
<dbReference type="GO" id="GO:0031507">
    <property type="term" value="P:heterochromatin formation"/>
    <property type="evidence" value="ECO:0000318"/>
    <property type="project" value="GO_Central"/>
</dbReference>
<dbReference type="CDD" id="cd00074">
    <property type="entry name" value="HFD_H2A"/>
    <property type="match status" value="1"/>
</dbReference>
<dbReference type="FunFam" id="1.10.20.10:FF:000008">
    <property type="entry name" value="Histone H2A"/>
    <property type="match status" value="1"/>
</dbReference>
<dbReference type="Gene3D" id="1.10.20.10">
    <property type="entry name" value="Histone, subunit A"/>
    <property type="match status" value="1"/>
</dbReference>
<dbReference type="InterPro" id="IPR009072">
    <property type="entry name" value="Histone-fold"/>
</dbReference>
<dbReference type="InterPro" id="IPR002119">
    <property type="entry name" value="Histone_H2A"/>
</dbReference>
<dbReference type="InterPro" id="IPR007125">
    <property type="entry name" value="Histone_H2A/H2B/H3"/>
</dbReference>
<dbReference type="InterPro" id="IPR032454">
    <property type="entry name" value="Histone_H2A_C"/>
</dbReference>
<dbReference type="InterPro" id="IPR032458">
    <property type="entry name" value="Histone_H2A_CS"/>
</dbReference>
<dbReference type="PANTHER" id="PTHR23430">
    <property type="entry name" value="HISTONE H2A"/>
    <property type="match status" value="1"/>
</dbReference>
<dbReference type="Pfam" id="PF00125">
    <property type="entry name" value="Histone"/>
    <property type="match status" value="1"/>
</dbReference>
<dbReference type="Pfam" id="PF16211">
    <property type="entry name" value="Histone_H2A_C"/>
    <property type="match status" value="1"/>
</dbReference>
<dbReference type="PRINTS" id="PR00620">
    <property type="entry name" value="HISTONEH2A"/>
</dbReference>
<dbReference type="SMART" id="SM00414">
    <property type="entry name" value="H2A"/>
    <property type="match status" value="1"/>
</dbReference>
<dbReference type="SUPFAM" id="SSF47113">
    <property type="entry name" value="Histone-fold"/>
    <property type="match status" value="1"/>
</dbReference>
<dbReference type="PROSITE" id="PS00046">
    <property type="entry name" value="HISTONE_H2A"/>
    <property type="match status" value="1"/>
</dbReference>